<feature type="chain" id="PRO_0000265666" description="Elongation factor 4">
    <location>
        <begin position="1"/>
        <end position="604"/>
    </location>
</feature>
<feature type="domain" description="tr-type G">
    <location>
        <begin position="8"/>
        <end position="190"/>
    </location>
</feature>
<feature type="binding site" evidence="1">
    <location>
        <begin position="20"/>
        <end position="25"/>
    </location>
    <ligand>
        <name>GTP</name>
        <dbReference type="ChEBI" id="CHEBI:37565"/>
    </ligand>
</feature>
<feature type="binding site" evidence="1">
    <location>
        <begin position="137"/>
        <end position="140"/>
    </location>
    <ligand>
        <name>GTP</name>
        <dbReference type="ChEBI" id="CHEBI:37565"/>
    </ligand>
</feature>
<dbReference type="EC" id="3.6.5.n1" evidence="1"/>
<dbReference type="EMBL" id="CP000158">
    <property type="protein sequence ID" value="ABI78654.1"/>
    <property type="molecule type" value="Genomic_DNA"/>
</dbReference>
<dbReference type="SMR" id="Q0C5X0"/>
<dbReference type="STRING" id="228405.HNE_0139"/>
<dbReference type="KEGG" id="hne:HNE_0139"/>
<dbReference type="eggNOG" id="COG0481">
    <property type="taxonomic scope" value="Bacteria"/>
</dbReference>
<dbReference type="HOGENOM" id="CLU_009995_3_3_5"/>
<dbReference type="Proteomes" id="UP000001959">
    <property type="component" value="Chromosome"/>
</dbReference>
<dbReference type="GO" id="GO:0005886">
    <property type="term" value="C:plasma membrane"/>
    <property type="evidence" value="ECO:0007669"/>
    <property type="project" value="UniProtKB-SubCell"/>
</dbReference>
<dbReference type="GO" id="GO:0005525">
    <property type="term" value="F:GTP binding"/>
    <property type="evidence" value="ECO:0007669"/>
    <property type="project" value="UniProtKB-UniRule"/>
</dbReference>
<dbReference type="GO" id="GO:0003924">
    <property type="term" value="F:GTPase activity"/>
    <property type="evidence" value="ECO:0007669"/>
    <property type="project" value="UniProtKB-UniRule"/>
</dbReference>
<dbReference type="GO" id="GO:0097216">
    <property type="term" value="F:guanosine tetraphosphate binding"/>
    <property type="evidence" value="ECO:0007669"/>
    <property type="project" value="UniProtKB-ARBA"/>
</dbReference>
<dbReference type="GO" id="GO:0043022">
    <property type="term" value="F:ribosome binding"/>
    <property type="evidence" value="ECO:0007669"/>
    <property type="project" value="UniProtKB-UniRule"/>
</dbReference>
<dbReference type="GO" id="GO:0003746">
    <property type="term" value="F:translation elongation factor activity"/>
    <property type="evidence" value="ECO:0007669"/>
    <property type="project" value="UniProtKB-UniRule"/>
</dbReference>
<dbReference type="GO" id="GO:0045727">
    <property type="term" value="P:positive regulation of translation"/>
    <property type="evidence" value="ECO:0007669"/>
    <property type="project" value="UniProtKB-UniRule"/>
</dbReference>
<dbReference type="CDD" id="cd03699">
    <property type="entry name" value="EF4_II"/>
    <property type="match status" value="1"/>
</dbReference>
<dbReference type="CDD" id="cd16260">
    <property type="entry name" value="EF4_III"/>
    <property type="match status" value="1"/>
</dbReference>
<dbReference type="CDD" id="cd01890">
    <property type="entry name" value="LepA"/>
    <property type="match status" value="1"/>
</dbReference>
<dbReference type="CDD" id="cd03709">
    <property type="entry name" value="lepA_C"/>
    <property type="match status" value="1"/>
</dbReference>
<dbReference type="FunFam" id="3.40.50.300:FF:000078">
    <property type="entry name" value="Elongation factor 4"/>
    <property type="match status" value="1"/>
</dbReference>
<dbReference type="FunFam" id="2.40.30.10:FF:000015">
    <property type="entry name" value="Translation factor GUF1, mitochondrial"/>
    <property type="match status" value="1"/>
</dbReference>
<dbReference type="FunFam" id="3.30.70.240:FF:000007">
    <property type="entry name" value="Translation factor GUF1, mitochondrial"/>
    <property type="match status" value="1"/>
</dbReference>
<dbReference type="FunFam" id="3.30.70.2570:FF:000001">
    <property type="entry name" value="Translation factor GUF1, mitochondrial"/>
    <property type="match status" value="1"/>
</dbReference>
<dbReference type="FunFam" id="3.30.70.870:FF:000004">
    <property type="entry name" value="Translation factor GUF1, mitochondrial"/>
    <property type="match status" value="1"/>
</dbReference>
<dbReference type="Gene3D" id="3.30.70.240">
    <property type="match status" value="1"/>
</dbReference>
<dbReference type="Gene3D" id="3.30.70.2570">
    <property type="entry name" value="Elongation factor 4, C-terminal domain"/>
    <property type="match status" value="1"/>
</dbReference>
<dbReference type="Gene3D" id="3.30.70.870">
    <property type="entry name" value="Elongation Factor G (Translational Gtpase), domain 3"/>
    <property type="match status" value="1"/>
</dbReference>
<dbReference type="Gene3D" id="3.40.50.300">
    <property type="entry name" value="P-loop containing nucleotide triphosphate hydrolases"/>
    <property type="match status" value="1"/>
</dbReference>
<dbReference type="Gene3D" id="2.40.30.10">
    <property type="entry name" value="Translation factors"/>
    <property type="match status" value="1"/>
</dbReference>
<dbReference type="HAMAP" id="MF_00071">
    <property type="entry name" value="LepA"/>
    <property type="match status" value="1"/>
</dbReference>
<dbReference type="InterPro" id="IPR006297">
    <property type="entry name" value="EF-4"/>
</dbReference>
<dbReference type="InterPro" id="IPR035647">
    <property type="entry name" value="EFG_III/V"/>
</dbReference>
<dbReference type="InterPro" id="IPR000640">
    <property type="entry name" value="EFG_V-like"/>
</dbReference>
<dbReference type="InterPro" id="IPR004161">
    <property type="entry name" value="EFTu-like_2"/>
</dbReference>
<dbReference type="InterPro" id="IPR031157">
    <property type="entry name" value="G_TR_CS"/>
</dbReference>
<dbReference type="InterPro" id="IPR038363">
    <property type="entry name" value="LepA_C_sf"/>
</dbReference>
<dbReference type="InterPro" id="IPR013842">
    <property type="entry name" value="LepA_CTD"/>
</dbReference>
<dbReference type="InterPro" id="IPR035654">
    <property type="entry name" value="LepA_IV"/>
</dbReference>
<dbReference type="InterPro" id="IPR027417">
    <property type="entry name" value="P-loop_NTPase"/>
</dbReference>
<dbReference type="InterPro" id="IPR005225">
    <property type="entry name" value="Small_GTP-bd"/>
</dbReference>
<dbReference type="InterPro" id="IPR000795">
    <property type="entry name" value="T_Tr_GTP-bd_dom"/>
</dbReference>
<dbReference type="NCBIfam" id="TIGR01393">
    <property type="entry name" value="lepA"/>
    <property type="match status" value="1"/>
</dbReference>
<dbReference type="NCBIfam" id="TIGR00231">
    <property type="entry name" value="small_GTP"/>
    <property type="match status" value="1"/>
</dbReference>
<dbReference type="PANTHER" id="PTHR43512:SF4">
    <property type="entry name" value="TRANSLATION FACTOR GUF1 HOMOLOG, CHLOROPLASTIC"/>
    <property type="match status" value="1"/>
</dbReference>
<dbReference type="PANTHER" id="PTHR43512">
    <property type="entry name" value="TRANSLATION FACTOR GUF1-RELATED"/>
    <property type="match status" value="1"/>
</dbReference>
<dbReference type="Pfam" id="PF00679">
    <property type="entry name" value="EFG_C"/>
    <property type="match status" value="1"/>
</dbReference>
<dbReference type="Pfam" id="PF00009">
    <property type="entry name" value="GTP_EFTU"/>
    <property type="match status" value="1"/>
</dbReference>
<dbReference type="Pfam" id="PF03144">
    <property type="entry name" value="GTP_EFTU_D2"/>
    <property type="match status" value="1"/>
</dbReference>
<dbReference type="Pfam" id="PF06421">
    <property type="entry name" value="LepA_C"/>
    <property type="match status" value="1"/>
</dbReference>
<dbReference type="PRINTS" id="PR00315">
    <property type="entry name" value="ELONGATNFCT"/>
</dbReference>
<dbReference type="SUPFAM" id="SSF54980">
    <property type="entry name" value="EF-G C-terminal domain-like"/>
    <property type="match status" value="2"/>
</dbReference>
<dbReference type="SUPFAM" id="SSF52540">
    <property type="entry name" value="P-loop containing nucleoside triphosphate hydrolases"/>
    <property type="match status" value="1"/>
</dbReference>
<dbReference type="PROSITE" id="PS00301">
    <property type="entry name" value="G_TR_1"/>
    <property type="match status" value="1"/>
</dbReference>
<dbReference type="PROSITE" id="PS51722">
    <property type="entry name" value="G_TR_2"/>
    <property type="match status" value="1"/>
</dbReference>
<keyword id="KW-0997">Cell inner membrane</keyword>
<keyword id="KW-1003">Cell membrane</keyword>
<keyword id="KW-0342">GTP-binding</keyword>
<keyword id="KW-0378">Hydrolase</keyword>
<keyword id="KW-0472">Membrane</keyword>
<keyword id="KW-0547">Nucleotide-binding</keyword>
<keyword id="KW-0648">Protein biosynthesis</keyword>
<keyword id="KW-1185">Reference proteome</keyword>
<comment type="function">
    <text evidence="1">Required for accurate and efficient protein synthesis under certain stress conditions. May act as a fidelity factor of the translation reaction, by catalyzing a one-codon backward translocation of tRNAs on improperly translocated ribosomes. Back-translocation proceeds from a post-translocation (POST) complex to a pre-translocation (PRE) complex, thus giving elongation factor G a second chance to translocate the tRNAs correctly. Binds to ribosomes in a GTP-dependent manner.</text>
</comment>
<comment type="catalytic activity">
    <reaction evidence="1">
        <text>GTP + H2O = GDP + phosphate + H(+)</text>
        <dbReference type="Rhea" id="RHEA:19669"/>
        <dbReference type="ChEBI" id="CHEBI:15377"/>
        <dbReference type="ChEBI" id="CHEBI:15378"/>
        <dbReference type="ChEBI" id="CHEBI:37565"/>
        <dbReference type="ChEBI" id="CHEBI:43474"/>
        <dbReference type="ChEBI" id="CHEBI:58189"/>
        <dbReference type="EC" id="3.6.5.n1"/>
    </reaction>
</comment>
<comment type="subcellular location">
    <subcellularLocation>
        <location evidence="1">Cell inner membrane</location>
        <topology evidence="1">Peripheral membrane protein</topology>
        <orientation evidence="1">Cytoplasmic side</orientation>
    </subcellularLocation>
</comment>
<comment type="similarity">
    <text evidence="1">Belongs to the TRAFAC class translation factor GTPase superfamily. Classic translation factor GTPase family. LepA subfamily.</text>
</comment>
<evidence type="ECO:0000255" key="1">
    <source>
        <dbReference type="HAMAP-Rule" id="MF_00071"/>
    </source>
</evidence>
<organism>
    <name type="scientific">Hyphomonas neptunium (strain ATCC 15444)</name>
    <dbReference type="NCBI Taxonomy" id="228405"/>
    <lineage>
        <taxon>Bacteria</taxon>
        <taxon>Pseudomonadati</taxon>
        <taxon>Pseudomonadota</taxon>
        <taxon>Alphaproteobacteria</taxon>
        <taxon>Hyphomonadales</taxon>
        <taxon>Hyphomonadaceae</taxon>
        <taxon>Hyphomonas</taxon>
    </lineage>
</organism>
<accession>Q0C5X0</accession>
<reference key="1">
    <citation type="journal article" date="2006" name="J. Bacteriol.">
        <title>Comparative genomic evidence for a close relationship between the dimorphic prosthecate bacteria Hyphomonas neptunium and Caulobacter crescentus.</title>
        <authorList>
            <person name="Badger J.H."/>
            <person name="Hoover T.R."/>
            <person name="Brun Y.V."/>
            <person name="Weiner R.M."/>
            <person name="Laub M.T."/>
            <person name="Alexandre G."/>
            <person name="Mrazek J."/>
            <person name="Ren Q."/>
            <person name="Paulsen I.T."/>
            <person name="Nelson K.E."/>
            <person name="Khouri H.M."/>
            <person name="Radune D."/>
            <person name="Sosa J."/>
            <person name="Dodson R.J."/>
            <person name="Sullivan S.A."/>
            <person name="Rosovitz M.J."/>
            <person name="Madupu R."/>
            <person name="Brinkac L.M."/>
            <person name="Durkin A.S."/>
            <person name="Daugherty S.C."/>
            <person name="Kothari S.P."/>
            <person name="Giglio M.G."/>
            <person name="Zhou L."/>
            <person name="Haft D.H."/>
            <person name="Selengut J.D."/>
            <person name="Davidsen T.M."/>
            <person name="Yang Q."/>
            <person name="Zafar N."/>
            <person name="Ward N.L."/>
        </authorList>
    </citation>
    <scope>NUCLEOTIDE SEQUENCE [LARGE SCALE GENOMIC DNA]</scope>
    <source>
        <strain>ATCC 15444</strain>
    </source>
</reference>
<proteinExistence type="inferred from homology"/>
<name>LEPA_HYPNA</name>
<sequence>MRPMTPRDKIRNFSIIAHIDHGKSTLADRLIQACGGLTDREMSEQVLDSMDIEKERGITIKAQTVRLSYTASDGETYTLNLMDTPGHVDFAYEVSRCLAACEGSLLVVDASQGVEAQTLANVYQAIDQNHEIVPVLNKIDLPAADVDRVKEQIEEIIGLDASDAVQISAKTGLGIPDVLEAIVNRLPPPRGGDHTAPLKAALVDAYYDPYLGVVVIVRVHEGILKKKQTIRMMRTGGVYEIDKVGTFNPKLTEADALGPGEVGYFVASIKEVGDCSIGDTITEDKRPTDKALPGYKDVQPVVFCGLFPMDAGDFDDLRAAMGKLRLNDASFTWEMETSAALGMGFRCGFLGLLHLEIIQERLSREFDLDLIATAPSVVYEMSMTDGTEIELHNPADMPDVVRITEIREPWIAATIYTPDEYLGSILKLCQDRRGIQIELSYVGGRACVKYELPLNEVVFDFYDRLKSISRGYASFDYTLIGHRAENLVKLQILVNEEPVDALAMLVHRDRAESRGRQMCERLKELIPRQMFKIPIQAAIGGRVVARETISAMRKDVTAKCYGGDATRKRKLLDKQAAGKKRMRQFGKVEIPQEAFVAALRMDGD</sequence>
<gene>
    <name evidence="1" type="primary">lepA</name>
    <name type="ordered locus">HNE_0139</name>
</gene>
<protein>
    <recommendedName>
        <fullName evidence="1">Elongation factor 4</fullName>
        <shortName evidence="1">EF-4</shortName>
        <ecNumber evidence="1">3.6.5.n1</ecNumber>
    </recommendedName>
    <alternativeName>
        <fullName evidence="1">Ribosomal back-translocase LepA</fullName>
    </alternativeName>
</protein>